<keyword id="KW-0378">Hydrolase</keyword>
<keyword id="KW-0408">Iron</keyword>
<keyword id="KW-0479">Metal-binding</keyword>
<keyword id="KW-1185">Reference proteome</keyword>
<evidence type="ECO:0000255" key="1">
    <source>
        <dbReference type="HAMAP-Rule" id="MF_01527"/>
    </source>
</evidence>
<organism>
    <name type="scientific">Methanosphaera stadtmanae (strain ATCC 43021 / DSM 3091 / JCM 11832 / MCB-3)</name>
    <dbReference type="NCBI Taxonomy" id="339860"/>
    <lineage>
        <taxon>Archaea</taxon>
        <taxon>Methanobacteriati</taxon>
        <taxon>Methanobacteriota</taxon>
        <taxon>Methanomada group</taxon>
        <taxon>Methanobacteria</taxon>
        <taxon>Methanobacteriales</taxon>
        <taxon>Methanobacteriaceae</taxon>
        <taxon>Methanosphaera</taxon>
    </lineage>
</organism>
<proteinExistence type="inferred from homology"/>
<sequence length="313" mass="35165">MTVSEFPDTQDKQPSIPISLTRVGVTGVKKLIKIKREDKRPIILIPTFDAFVDLPSTQKGVHMSRNPEAISEIVDEAANQSEIHLENICANLVKRLLEKHEYALHAETEARGEYIINKLSPVSKRKTQETTHIIARAIAMKDDEGNISVRKMIGAEVIGMTVCPCAQESVEKDSKDKLLEFLDEETTQKVLDVVTFASHNQRGVGTILLEVPEKQDVNVDDLIKIIQDAMSSPVCEILKRPDENRIVTNAHQNPVFVEDCVRNMVIGLLEKYPNLPDDSVVTIKQVNQESIHQHNAYAEKVASFGKLREENKE</sequence>
<reference key="1">
    <citation type="journal article" date="2006" name="J. Bacteriol.">
        <title>The genome sequence of Methanosphaera stadtmanae reveals why this human intestinal archaeon is restricted to methanol and H2 for methane formation and ATP synthesis.</title>
        <authorList>
            <person name="Fricke W.F."/>
            <person name="Seedorf H."/>
            <person name="Henne A."/>
            <person name="Kruer M."/>
            <person name="Liesegang H."/>
            <person name="Hedderich R."/>
            <person name="Gottschalk G."/>
            <person name="Thauer R.K."/>
        </authorList>
    </citation>
    <scope>NUCLEOTIDE SEQUENCE [LARGE SCALE GENOMIC DNA]</scope>
    <source>
        <strain>ATCC 43021 / DSM 3091 / JCM 11832 / MCB-3</strain>
    </source>
</reference>
<protein>
    <recommendedName>
        <fullName evidence="1">GTP cyclohydrolase MptA</fullName>
        <ecNumber evidence="1">3.5.4.39</ecNumber>
    </recommendedName>
    <alternativeName>
        <fullName evidence="1">GTP cyclohydrolase IV</fullName>
    </alternativeName>
</protein>
<feature type="chain" id="PRO_0000289540" description="GTP cyclohydrolase MptA">
    <location>
        <begin position="1"/>
        <end position="313"/>
    </location>
</feature>
<feature type="site" description="May be catalytically important" evidence="1">
    <location>
        <position position="163"/>
    </location>
</feature>
<accession>Q2NI42</accession>
<comment type="function">
    <text evidence="1">Converts GTP to 7,8-dihydro-D-neopterin 2',3'-cyclic phosphate, the first intermediate in the biosynthesis of coenzyme methanopterin.</text>
</comment>
<comment type="catalytic activity">
    <reaction evidence="1">
        <text>GTP + H2O = 7,8-dihydroneopterin 2',3'-cyclic phosphate + formate + diphosphate + H(+)</text>
        <dbReference type="Rhea" id="RHEA:25860"/>
        <dbReference type="ChEBI" id="CHEBI:15377"/>
        <dbReference type="ChEBI" id="CHEBI:15378"/>
        <dbReference type="ChEBI" id="CHEBI:15740"/>
        <dbReference type="ChEBI" id="CHEBI:33019"/>
        <dbReference type="ChEBI" id="CHEBI:37565"/>
        <dbReference type="ChEBI" id="CHEBI:58854"/>
        <dbReference type="EC" id="3.5.4.39"/>
    </reaction>
</comment>
<comment type="cofactor">
    <cofactor evidence="1">
        <name>Fe(2+)</name>
        <dbReference type="ChEBI" id="CHEBI:29033"/>
    </cofactor>
    <text evidence="1">Binds 1 Fe(2+) ion per subunit.</text>
</comment>
<comment type="pathway">
    <text evidence="1">Cofactor biosynthesis; 5,6,7,8-tetrahydromethanopterin biosynthesis.</text>
</comment>
<comment type="subunit">
    <text evidence="1">Homodimer.</text>
</comment>
<comment type="similarity">
    <text evidence="1">Belongs to the GTP cyclohydrolase IV family.</text>
</comment>
<gene>
    <name evidence="1" type="primary">mptA</name>
    <name type="ordered locus">Msp_0294</name>
</gene>
<dbReference type="EC" id="3.5.4.39" evidence="1"/>
<dbReference type="EMBL" id="CP000102">
    <property type="protein sequence ID" value="ABC56704.1"/>
    <property type="molecule type" value="Genomic_DNA"/>
</dbReference>
<dbReference type="RefSeq" id="WP_011405904.1">
    <property type="nucleotide sequence ID" value="NC_007681.1"/>
</dbReference>
<dbReference type="SMR" id="Q2NI42"/>
<dbReference type="STRING" id="339860.Msp_0294"/>
<dbReference type="GeneID" id="41324867"/>
<dbReference type="KEGG" id="mst:Msp_0294"/>
<dbReference type="eggNOG" id="arCOG04301">
    <property type="taxonomic scope" value="Archaea"/>
</dbReference>
<dbReference type="HOGENOM" id="CLU_062816_1_0_2"/>
<dbReference type="OrthoDB" id="53087at2157"/>
<dbReference type="UniPathway" id="UPA00065"/>
<dbReference type="Proteomes" id="UP000001931">
    <property type="component" value="Chromosome"/>
</dbReference>
<dbReference type="GO" id="GO:0003934">
    <property type="term" value="F:GTP cyclohydrolase I activity"/>
    <property type="evidence" value="ECO:0007669"/>
    <property type="project" value="InterPro"/>
</dbReference>
<dbReference type="GO" id="GO:0044682">
    <property type="term" value="F:GTP cyclohydrolase IV activity"/>
    <property type="evidence" value="ECO:0007669"/>
    <property type="project" value="UniProtKB-UniRule"/>
</dbReference>
<dbReference type="GO" id="GO:0005506">
    <property type="term" value="F:iron ion binding"/>
    <property type="evidence" value="ECO:0007669"/>
    <property type="project" value="UniProtKB-UniRule"/>
</dbReference>
<dbReference type="GO" id="GO:2001118">
    <property type="term" value="P:tetrahydromethanopterin biosynthetic process"/>
    <property type="evidence" value="ECO:0007669"/>
    <property type="project" value="UniProtKB-UniRule"/>
</dbReference>
<dbReference type="Gene3D" id="3.10.270.10">
    <property type="entry name" value="Urate Oxidase"/>
    <property type="match status" value="1"/>
</dbReference>
<dbReference type="HAMAP" id="MF_01527_A">
    <property type="entry name" value="GTP_cyclohydrol_A"/>
    <property type="match status" value="1"/>
</dbReference>
<dbReference type="InterPro" id="IPR003801">
    <property type="entry name" value="GTP_cyclohydrolase_FolE2/MptA"/>
</dbReference>
<dbReference type="InterPro" id="IPR022840">
    <property type="entry name" value="GTP_cyclohydrolase_MptA"/>
</dbReference>
<dbReference type="NCBIfam" id="TIGR00294">
    <property type="entry name" value="GTP cyclohydrolase MptA"/>
    <property type="match status" value="1"/>
</dbReference>
<dbReference type="PANTHER" id="PTHR36445">
    <property type="entry name" value="GTP CYCLOHYDROLASE MPTA"/>
    <property type="match status" value="1"/>
</dbReference>
<dbReference type="PANTHER" id="PTHR36445:SF1">
    <property type="entry name" value="GTP CYCLOHYDROLASE MPTA"/>
    <property type="match status" value="1"/>
</dbReference>
<dbReference type="Pfam" id="PF02649">
    <property type="entry name" value="GCHY-1"/>
    <property type="match status" value="1"/>
</dbReference>
<name>MPTA_METST</name>